<proteinExistence type="inferred from homology"/>
<name>PLSX_SALTI</name>
<keyword id="KW-0963">Cytoplasm</keyword>
<keyword id="KW-0444">Lipid biosynthesis</keyword>
<keyword id="KW-0443">Lipid metabolism</keyword>
<keyword id="KW-0594">Phospholipid biosynthesis</keyword>
<keyword id="KW-1208">Phospholipid metabolism</keyword>
<keyword id="KW-0808">Transferase</keyword>
<evidence type="ECO:0000255" key="1">
    <source>
        <dbReference type="HAMAP-Rule" id="MF_00019"/>
    </source>
</evidence>
<dbReference type="EC" id="2.3.1.274" evidence="1"/>
<dbReference type="EMBL" id="AL513382">
    <property type="protein sequence ID" value="CAD08316.1"/>
    <property type="molecule type" value="Genomic_DNA"/>
</dbReference>
<dbReference type="EMBL" id="AE014613">
    <property type="protein sequence ID" value="AAO69352.1"/>
    <property type="molecule type" value="Genomic_DNA"/>
</dbReference>
<dbReference type="RefSeq" id="NP_455685.1">
    <property type="nucleotide sequence ID" value="NC_003198.1"/>
</dbReference>
<dbReference type="RefSeq" id="WP_001518286.1">
    <property type="nucleotide sequence ID" value="NZ_WSUR01000030.1"/>
</dbReference>
<dbReference type="SMR" id="P0A260"/>
<dbReference type="STRING" id="220341.gene:17585196"/>
<dbReference type="KEGG" id="stt:t1728"/>
<dbReference type="KEGG" id="sty:STY1231"/>
<dbReference type="PATRIC" id="fig|220341.7.peg.1233"/>
<dbReference type="eggNOG" id="COG0416">
    <property type="taxonomic scope" value="Bacteria"/>
</dbReference>
<dbReference type="HOGENOM" id="CLU_039379_1_0_6"/>
<dbReference type="OMA" id="HGKSNAR"/>
<dbReference type="OrthoDB" id="9806408at2"/>
<dbReference type="UniPathway" id="UPA00085"/>
<dbReference type="Proteomes" id="UP000000541">
    <property type="component" value="Chromosome"/>
</dbReference>
<dbReference type="Proteomes" id="UP000002670">
    <property type="component" value="Chromosome"/>
</dbReference>
<dbReference type="GO" id="GO:0005737">
    <property type="term" value="C:cytoplasm"/>
    <property type="evidence" value="ECO:0007669"/>
    <property type="project" value="UniProtKB-SubCell"/>
</dbReference>
<dbReference type="GO" id="GO:0043811">
    <property type="term" value="F:phosphate:acyl-[acyl carrier protein] acyltransferase activity"/>
    <property type="evidence" value="ECO:0007669"/>
    <property type="project" value="UniProtKB-UniRule"/>
</dbReference>
<dbReference type="GO" id="GO:0006633">
    <property type="term" value="P:fatty acid biosynthetic process"/>
    <property type="evidence" value="ECO:0007669"/>
    <property type="project" value="UniProtKB-UniRule"/>
</dbReference>
<dbReference type="GO" id="GO:0008654">
    <property type="term" value="P:phospholipid biosynthetic process"/>
    <property type="evidence" value="ECO:0007669"/>
    <property type="project" value="UniProtKB-KW"/>
</dbReference>
<dbReference type="FunFam" id="3.40.718.10:FF:000008">
    <property type="entry name" value="Phosphate acyltransferase"/>
    <property type="match status" value="1"/>
</dbReference>
<dbReference type="Gene3D" id="3.40.718.10">
    <property type="entry name" value="Isopropylmalate Dehydrogenase"/>
    <property type="match status" value="1"/>
</dbReference>
<dbReference type="HAMAP" id="MF_00019">
    <property type="entry name" value="PlsX"/>
    <property type="match status" value="1"/>
</dbReference>
<dbReference type="InterPro" id="IPR003664">
    <property type="entry name" value="FA_synthesis"/>
</dbReference>
<dbReference type="InterPro" id="IPR012281">
    <property type="entry name" value="Phospholipid_synth_PlsX-like"/>
</dbReference>
<dbReference type="NCBIfam" id="TIGR00182">
    <property type="entry name" value="plsX"/>
    <property type="match status" value="1"/>
</dbReference>
<dbReference type="PANTHER" id="PTHR30100">
    <property type="entry name" value="FATTY ACID/PHOSPHOLIPID SYNTHESIS PROTEIN PLSX"/>
    <property type="match status" value="1"/>
</dbReference>
<dbReference type="PANTHER" id="PTHR30100:SF1">
    <property type="entry name" value="PHOSPHATE ACYLTRANSFERASE"/>
    <property type="match status" value="1"/>
</dbReference>
<dbReference type="Pfam" id="PF02504">
    <property type="entry name" value="FA_synthesis"/>
    <property type="match status" value="1"/>
</dbReference>
<dbReference type="PIRSF" id="PIRSF002465">
    <property type="entry name" value="Phsphlp_syn_PlsX"/>
    <property type="match status" value="1"/>
</dbReference>
<dbReference type="SUPFAM" id="SSF53659">
    <property type="entry name" value="Isocitrate/Isopropylmalate dehydrogenase-like"/>
    <property type="match status" value="1"/>
</dbReference>
<comment type="function">
    <text evidence="1">Catalyzes the reversible formation of acyl-phosphate (acyl-PO(4)) from acyl-[acyl-carrier-protein] (acyl-ACP). This enzyme utilizes acyl-ACP as fatty acyl donor, but not acyl-CoA.</text>
</comment>
<comment type="catalytic activity">
    <reaction evidence="1">
        <text>a fatty acyl-[ACP] + phosphate = an acyl phosphate + holo-[ACP]</text>
        <dbReference type="Rhea" id="RHEA:42292"/>
        <dbReference type="Rhea" id="RHEA-COMP:9685"/>
        <dbReference type="Rhea" id="RHEA-COMP:14125"/>
        <dbReference type="ChEBI" id="CHEBI:43474"/>
        <dbReference type="ChEBI" id="CHEBI:59918"/>
        <dbReference type="ChEBI" id="CHEBI:64479"/>
        <dbReference type="ChEBI" id="CHEBI:138651"/>
        <dbReference type="EC" id="2.3.1.274"/>
    </reaction>
</comment>
<comment type="pathway">
    <text evidence="1">Lipid metabolism; phospholipid metabolism.</text>
</comment>
<comment type="subunit">
    <text evidence="1">Homodimer. Probably interacts with PlsY.</text>
</comment>
<comment type="subcellular location">
    <subcellularLocation>
        <location evidence="1">Cytoplasm</location>
    </subcellularLocation>
    <text evidence="1">Associated with the membrane possibly through PlsY.</text>
</comment>
<comment type="similarity">
    <text evidence="1">Belongs to the PlsX family.</text>
</comment>
<organism>
    <name type="scientific">Salmonella typhi</name>
    <dbReference type="NCBI Taxonomy" id="90370"/>
    <lineage>
        <taxon>Bacteria</taxon>
        <taxon>Pseudomonadati</taxon>
        <taxon>Pseudomonadota</taxon>
        <taxon>Gammaproteobacteria</taxon>
        <taxon>Enterobacterales</taxon>
        <taxon>Enterobacteriaceae</taxon>
        <taxon>Salmonella</taxon>
    </lineage>
</organism>
<feature type="chain" id="PRO_0000189930" description="Phosphate acyltransferase">
    <location>
        <begin position="1"/>
        <end position="359"/>
    </location>
</feature>
<accession>P0A260</accession>
<accession>O85138</accession>
<reference key="1">
    <citation type="journal article" date="2001" name="Nature">
        <title>Complete genome sequence of a multiple drug resistant Salmonella enterica serovar Typhi CT18.</title>
        <authorList>
            <person name="Parkhill J."/>
            <person name="Dougan G."/>
            <person name="James K.D."/>
            <person name="Thomson N.R."/>
            <person name="Pickard D."/>
            <person name="Wain J."/>
            <person name="Churcher C.M."/>
            <person name="Mungall K.L."/>
            <person name="Bentley S.D."/>
            <person name="Holden M.T.G."/>
            <person name="Sebaihia M."/>
            <person name="Baker S."/>
            <person name="Basham D."/>
            <person name="Brooks K."/>
            <person name="Chillingworth T."/>
            <person name="Connerton P."/>
            <person name="Cronin A."/>
            <person name="Davis P."/>
            <person name="Davies R.M."/>
            <person name="Dowd L."/>
            <person name="White N."/>
            <person name="Farrar J."/>
            <person name="Feltwell T."/>
            <person name="Hamlin N."/>
            <person name="Haque A."/>
            <person name="Hien T.T."/>
            <person name="Holroyd S."/>
            <person name="Jagels K."/>
            <person name="Krogh A."/>
            <person name="Larsen T.S."/>
            <person name="Leather S."/>
            <person name="Moule S."/>
            <person name="O'Gaora P."/>
            <person name="Parry C."/>
            <person name="Quail M.A."/>
            <person name="Rutherford K.M."/>
            <person name="Simmonds M."/>
            <person name="Skelton J."/>
            <person name="Stevens K."/>
            <person name="Whitehead S."/>
            <person name="Barrell B.G."/>
        </authorList>
    </citation>
    <scope>NUCLEOTIDE SEQUENCE [LARGE SCALE GENOMIC DNA]</scope>
    <source>
        <strain>CT18</strain>
    </source>
</reference>
<reference key="2">
    <citation type="journal article" date="2003" name="J. Bacteriol.">
        <title>Comparative genomics of Salmonella enterica serovar Typhi strains Ty2 and CT18.</title>
        <authorList>
            <person name="Deng W."/>
            <person name="Liou S.-R."/>
            <person name="Plunkett G. III"/>
            <person name="Mayhew G.F."/>
            <person name="Rose D.J."/>
            <person name="Burland V."/>
            <person name="Kodoyianni V."/>
            <person name="Schwartz D.C."/>
            <person name="Blattner F.R."/>
        </authorList>
    </citation>
    <scope>NUCLEOTIDE SEQUENCE [LARGE SCALE GENOMIC DNA]</scope>
    <source>
        <strain>ATCC 700931 / Ty2</strain>
    </source>
</reference>
<gene>
    <name evidence="1" type="primary">plsX</name>
    <name type="ordered locus">STY1231</name>
    <name type="ordered locus">t1728</name>
</gene>
<sequence>MTRLTLALDVMGGDFGPSVTVPAALQALNANSQLTLLLVGNPDIITPLLAKADFEQRSRLQIIPAQSVIASDARPSQAIRASRGTSMRVALELVKEGRAEACVSAGNTGALMGLAKLLLKPLEGIERPALVTVLPHQQKGKTVVLDLGANVDCDSTMLVQFAVMGAVLAEEVVGIKNPRVALLNIGEEETKGLDSIREASLMLKTVPTINYIGYLEANELLTGKTDVLVCDGFTGNVTLKTMEGVVRMFLSLLKSQGEGKKRSWWLLLLKRWLQKSLTRRFSHLNPDQYNGACLLGLRGTVIKSHGAANQRAFAVAIEQAVQAVQRQVPQRIAARLESVYPAGFEPLDDGKGVNLRAHR</sequence>
<protein>
    <recommendedName>
        <fullName evidence="1">Phosphate acyltransferase</fullName>
        <ecNumber evidence="1">2.3.1.274</ecNumber>
    </recommendedName>
    <alternativeName>
        <fullName evidence="1">Acyl-ACP phosphotransacylase</fullName>
    </alternativeName>
    <alternativeName>
        <fullName evidence="1">Acyl-[acyl-carrier-protein]--phosphate acyltransferase</fullName>
    </alternativeName>
    <alternativeName>
        <fullName evidence="1">Phosphate-acyl-ACP acyltransferase</fullName>
    </alternativeName>
</protein>